<keyword id="KW-1003">Cell membrane</keyword>
<keyword id="KW-0472">Membrane</keyword>
<keyword id="KW-0653">Protein transport</keyword>
<keyword id="KW-1185">Reference proteome</keyword>
<keyword id="KW-0811">Translocation</keyword>
<keyword id="KW-0812">Transmembrane</keyword>
<keyword id="KW-1133">Transmembrane helix</keyword>
<keyword id="KW-0813">Transport</keyword>
<organism>
    <name type="scientific">Bacillus subtilis (strain 168)</name>
    <dbReference type="NCBI Taxonomy" id="224308"/>
    <lineage>
        <taxon>Bacteria</taxon>
        <taxon>Bacillati</taxon>
        <taxon>Bacillota</taxon>
        <taxon>Bacilli</taxon>
        <taxon>Bacillales</taxon>
        <taxon>Bacillaceae</taxon>
        <taxon>Bacillus</taxon>
    </lineage>
</organism>
<name>SECG_BACSU</name>
<proteinExistence type="evidence at transcript level"/>
<dbReference type="EMBL" id="AL009126">
    <property type="protein sequence ID" value="CAB15368.1"/>
    <property type="molecule type" value="Genomic_DNA"/>
</dbReference>
<dbReference type="PIR" id="A70028">
    <property type="entry name" value="A70028"/>
</dbReference>
<dbReference type="RefSeq" id="NP_391243.1">
    <property type="nucleotide sequence ID" value="NC_000964.3"/>
</dbReference>
<dbReference type="RefSeq" id="WP_003220028.1">
    <property type="nucleotide sequence ID" value="NZ_OZ025638.1"/>
</dbReference>
<dbReference type="FunCoup" id="O32233">
    <property type="interactions" value="231"/>
</dbReference>
<dbReference type="STRING" id="224308.BSU33630"/>
<dbReference type="TCDB" id="3.A.5.2.1">
    <property type="family name" value="the general secretory pathway (sec) family"/>
</dbReference>
<dbReference type="PaxDb" id="224308-BSU33630"/>
<dbReference type="EnsemblBacteria" id="CAB15368">
    <property type="protein sequence ID" value="CAB15368"/>
    <property type="gene ID" value="BSU_33630"/>
</dbReference>
<dbReference type="GeneID" id="86872032"/>
<dbReference type="GeneID" id="938477"/>
<dbReference type="KEGG" id="bsu:BSU33630"/>
<dbReference type="PATRIC" id="fig|224308.179.peg.3648"/>
<dbReference type="eggNOG" id="COG1314">
    <property type="taxonomic scope" value="Bacteria"/>
</dbReference>
<dbReference type="InParanoid" id="O32233"/>
<dbReference type="BioCyc" id="BSUB:BSU33630-MONOMER"/>
<dbReference type="PRO" id="PR:O32233"/>
<dbReference type="Proteomes" id="UP000001570">
    <property type="component" value="Chromosome"/>
</dbReference>
<dbReference type="GO" id="GO:0005886">
    <property type="term" value="C:plasma membrane"/>
    <property type="evidence" value="ECO:0000318"/>
    <property type="project" value="GO_Central"/>
</dbReference>
<dbReference type="GO" id="GO:0015450">
    <property type="term" value="F:protein-transporting ATPase activity"/>
    <property type="evidence" value="ECO:0007669"/>
    <property type="project" value="InterPro"/>
</dbReference>
<dbReference type="GO" id="GO:0065002">
    <property type="term" value="P:intracellular protein transmembrane transport"/>
    <property type="evidence" value="ECO:0000318"/>
    <property type="project" value="GO_Central"/>
</dbReference>
<dbReference type="GO" id="GO:0009306">
    <property type="term" value="P:protein secretion"/>
    <property type="evidence" value="ECO:0007669"/>
    <property type="project" value="InterPro"/>
</dbReference>
<dbReference type="GO" id="GO:0043952">
    <property type="term" value="P:protein transport by the Sec complex"/>
    <property type="evidence" value="ECO:0000318"/>
    <property type="project" value="GO_Central"/>
</dbReference>
<dbReference type="InterPro" id="IPR004692">
    <property type="entry name" value="SecG"/>
</dbReference>
<dbReference type="NCBIfam" id="TIGR00810">
    <property type="entry name" value="secG"/>
    <property type="match status" value="1"/>
</dbReference>
<dbReference type="PANTHER" id="PTHR34182">
    <property type="entry name" value="PROTEIN-EXPORT MEMBRANE PROTEIN SECG"/>
    <property type="match status" value="1"/>
</dbReference>
<dbReference type="PANTHER" id="PTHR34182:SF1">
    <property type="entry name" value="PROTEIN-EXPORT MEMBRANE PROTEIN SECG"/>
    <property type="match status" value="1"/>
</dbReference>
<dbReference type="Pfam" id="PF03840">
    <property type="entry name" value="SecG"/>
    <property type="match status" value="1"/>
</dbReference>
<dbReference type="PRINTS" id="PR01651">
    <property type="entry name" value="SECGEXPORT"/>
</dbReference>
<comment type="function">
    <text evidence="1">Involved in protein export. Participates in an early event of protein translocation (By similarity).</text>
</comment>
<comment type="subcellular location">
    <subcellularLocation>
        <location evidence="1">Cell membrane</location>
        <topology evidence="1">Multi-pass membrane protein</topology>
    </subcellularLocation>
</comment>
<comment type="induction">
    <text evidence="3">Constitutively expressed, part of a 5 gene operon with multiple promoters. Not ethanol-stress induced.</text>
</comment>
<comment type="similarity">
    <text evidence="4">Belongs to the SecG family.</text>
</comment>
<sequence>MHAVLITLLVIVSIALIIVVLLQSSKSAGLSGAISGGAEQLFGKQKARGLDLILHRITVVLAVLFFVLTIALAYIL</sequence>
<gene>
    <name type="primary">secG</name>
    <name type="synonym">yvaL</name>
    <name type="ordered locus">BSU33630</name>
</gene>
<accession>O32233</accession>
<feature type="chain" id="PRO_0000157220" description="Probable protein-export membrane protein SecG">
    <location>
        <begin position="1"/>
        <end position="76"/>
    </location>
</feature>
<feature type="transmembrane region" description="Helical" evidence="2">
    <location>
        <begin position="2"/>
        <end position="22"/>
    </location>
</feature>
<feature type="transmembrane region" description="Helical" evidence="2">
    <location>
        <begin position="56"/>
        <end position="76"/>
    </location>
</feature>
<evidence type="ECO:0000250" key="1"/>
<evidence type="ECO:0000255" key="2"/>
<evidence type="ECO:0000269" key="3">
    <source>
    </source>
</evidence>
<evidence type="ECO:0000305" key="4"/>
<protein>
    <recommendedName>
        <fullName>Probable protein-export membrane protein SecG</fullName>
    </recommendedName>
</protein>
<reference key="1">
    <citation type="journal article" date="1997" name="Nature">
        <title>The complete genome sequence of the Gram-positive bacterium Bacillus subtilis.</title>
        <authorList>
            <person name="Kunst F."/>
            <person name="Ogasawara N."/>
            <person name="Moszer I."/>
            <person name="Albertini A.M."/>
            <person name="Alloni G."/>
            <person name="Azevedo V."/>
            <person name="Bertero M.G."/>
            <person name="Bessieres P."/>
            <person name="Bolotin A."/>
            <person name="Borchert S."/>
            <person name="Borriss R."/>
            <person name="Boursier L."/>
            <person name="Brans A."/>
            <person name="Braun M."/>
            <person name="Brignell S.C."/>
            <person name="Bron S."/>
            <person name="Brouillet S."/>
            <person name="Bruschi C.V."/>
            <person name="Caldwell B."/>
            <person name="Capuano V."/>
            <person name="Carter N.M."/>
            <person name="Choi S.-K."/>
            <person name="Codani J.-J."/>
            <person name="Connerton I.F."/>
            <person name="Cummings N.J."/>
            <person name="Daniel R.A."/>
            <person name="Denizot F."/>
            <person name="Devine K.M."/>
            <person name="Duesterhoeft A."/>
            <person name="Ehrlich S.D."/>
            <person name="Emmerson P.T."/>
            <person name="Entian K.-D."/>
            <person name="Errington J."/>
            <person name="Fabret C."/>
            <person name="Ferrari E."/>
            <person name="Foulger D."/>
            <person name="Fritz C."/>
            <person name="Fujita M."/>
            <person name="Fujita Y."/>
            <person name="Fuma S."/>
            <person name="Galizzi A."/>
            <person name="Galleron N."/>
            <person name="Ghim S.-Y."/>
            <person name="Glaser P."/>
            <person name="Goffeau A."/>
            <person name="Golightly E.J."/>
            <person name="Grandi G."/>
            <person name="Guiseppi G."/>
            <person name="Guy B.J."/>
            <person name="Haga K."/>
            <person name="Haiech J."/>
            <person name="Harwood C.R."/>
            <person name="Henaut A."/>
            <person name="Hilbert H."/>
            <person name="Holsappel S."/>
            <person name="Hosono S."/>
            <person name="Hullo M.-F."/>
            <person name="Itaya M."/>
            <person name="Jones L.-M."/>
            <person name="Joris B."/>
            <person name="Karamata D."/>
            <person name="Kasahara Y."/>
            <person name="Klaerr-Blanchard M."/>
            <person name="Klein C."/>
            <person name="Kobayashi Y."/>
            <person name="Koetter P."/>
            <person name="Koningstein G."/>
            <person name="Krogh S."/>
            <person name="Kumano M."/>
            <person name="Kurita K."/>
            <person name="Lapidus A."/>
            <person name="Lardinois S."/>
            <person name="Lauber J."/>
            <person name="Lazarevic V."/>
            <person name="Lee S.-M."/>
            <person name="Levine A."/>
            <person name="Liu H."/>
            <person name="Masuda S."/>
            <person name="Mauel C."/>
            <person name="Medigue C."/>
            <person name="Medina N."/>
            <person name="Mellado R.P."/>
            <person name="Mizuno M."/>
            <person name="Moestl D."/>
            <person name="Nakai S."/>
            <person name="Noback M."/>
            <person name="Noone D."/>
            <person name="O'Reilly M."/>
            <person name="Ogawa K."/>
            <person name="Ogiwara A."/>
            <person name="Oudega B."/>
            <person name="Park S.-H."/>
            <person name="Parro V."/>
            <person name="Pohl T.M."/>
            <person name="Portetelle D."/>
            <person name="Porwollik S."/>
            <person name="Prescott A.M."/>
            <person name="Presecan E."/>
            <person name="Pujic P."/>
            <person name="Purnelle B."/>
            <person name="Rapoport G."/>
            <person name="Rey M."/>
            <person name="Reynolds S."/>
            <person name="Rieger M."/>
            <person name="Rivolta C."/>
            <person name="Rocha E."/>
            <person name="Roche B."/>
            <person name="Rose M."/>
            <person name="Sadaie Y."/>
            <person name="Sato T."/>
            <person name="Scanlan E."/>
            <person name="Schleich S."/>
            <person name="Schroeter R."/>
            <person name="Scoffone F."/>
            <person name="Sekiguchi J."/>
            <person name="Sekowska A."/>
            <person name="Seror S.J."/>
            <person name="Serror P."/>
            <person name="Shin B.-S."/>
            <person name="Soldo B."/>
            <person name="Sorokin A."/>
            <person name="Tacconi E."/>
            <person name="Takagi T."/>
            <person name="Takahashi H."/>
            <person name="Takemaru K."/>
            <person name="Takeuchi M."/>
            <person name="Tamakoshi A."/>
            <person name="Tanaka T."/>
            <person name="Terpstra P."/>
            <person name="Tognoni A."/>
            <person name="Tosato V."/>
            <person name="Uchiyama S."/>
            <person name="Vandenbol M."/>
            <person name="Vannier F."/>
            <person name="Vassarotti A."/>
            <person name="Viari A."/>
            <person name="Wambutt R."/>
            <person name="Wedler E."/>
            <person name="Wedler H."/>
            <person name="Weitzenegger T."/>
            <person name="Winters P."/>
            <person name="Wipat A."/>
            <person name="Yamamoto H."/>
            <person name="Yamane K."/>
            <person name="Yasumoto K."/>
            <person name="Yata K."/>
            <person name="Yoshida K."/>
            <person name="Yoshikawa H.-F."/>
            <person name="Zumstein E."/>
            <person name="Yoshikawa H."/>
            <person name="Danchin A."/>
        </authorList>
    </citation>
    <scope>NUCLEOTIDE SEQUENCE [LARGE SCALE GENOMIC DNA]</scope>
    <source>
        <strain>168</strain>
    </source>
</reference>
<reference key="2">
    <citation type="journal article" date="2007" name="J. Bacteriol.">
        <title>The SsrA-SmpB ribosome rescue system is important for growth of Bacillus subtilis at low and high temperatures.</title>
        <authorList>
            <person name="Shin J.H."/>
            <person name="Price C.W."/>
        </authorList>
    </citation>
    <scope>INDUCTION</scope>
    <source>
        <strain>168 / Marburg / ATCC 6051 / DSM 10 / JCM 1465 / NBRC 13719 / NCIMB 3610 / NRRL NRS-744 / VKM B-501</strain>
    </source>
</reference>